<sequence length="252" mass="29353">MEDFVRQCFNPMIVELAEKAMKEYGEDLKIETNKFAAICTHLEVCFMYSDFHFINEQGESIIVELDDPNALLKHRFEIIEGRDRTMAWTVVNSICNTTGAEKPKFLPDLYDYKENRFIEIGVTRREVHIYYLEKANKIKSEKTHIHIFSFTGEEMATKADYTLDEESRARIKTRLFTIRQEMASRGLWDSFISPKEAKKQLKKDLKSQGQCAGSPTKVSRRTSPALRILEPMWMDSNRTATLRASFLKCPKK</sequence>
<proteinExistence type="inferred from homology"/>
<reference key="1">
    <citation type="journal article" date="1988" name="Virology">
        <title>Identification of sequence changes in the cold-adapted, live attenuated influenza vaccine strain, A/Ann Arbor/6/60 (H2N2).</title>
        <authorList>
            <person name="Cox N.J."/>
            <person name="Kitame F."/>
            <person name="Kendal A.P."/>
            <person name="Maassab H.F."/>
            <person name="Naeve C."/>
        </authorList>
    </citation>
    <scope>NUCLEOTIDE SEQUENCE [GENOMIC RNA]</scope>
</reference>
<reference key="2">
    <citation type="journal article" date="2004" name="Virology">
        <title>Genetic analysis of human H2N2 and early H3N2 influenza viruses, 1957-1972: evidence for genetic divergence and multiple reassortment events.</title>
        <authorList>
            <person name="Lindstrom S.E."/>
            <person name="Cox N.J."/>
            <person name="Klimov A."/>
        </authorList>
    </citation>
    <scope>NUCLEOTIDE SEQUENCE [GENOMIC RNA]</scope>
</reference>
<evidence type="ECO:0000250" key="1">
    <source>
        <dbReference type="UniProtKB" id="P0CK64"/>
    </source>
</evidence>
<evidence type="ECO:0000250" key="2">
    <source>
        <dbReference type="UniProtKB" id="P0CK68"/>
    </source>
</evidence>
<evidence type="ECO:0000250" key="3">
    <source>
        <dbReference type="UniProtKB" id="P0DJW8"/>
    </source>
</evidence>
<evidence type="ECO:0000250" key="4">
    <source>
        <dbReference type="UniProtKB" id="P0DXO5"/>
    </source>
</evidence>
<evidence type="ECO:0000250" key="5">
    <source>
        <dbReference type="UniProtKB" id="P0DXO6"/>
    </source>
</evidence>
<evidence type="ECO:0000305" key="6"/>
<dbReference type="EMBL" id="M23974">
    <property type="status" value="NOT_ANNOTATED_CDS"/>
    <property type="molecule type" value="Genomic_RNA"/>
</dbReference>
<dbReference type="EMBL" id="AY209994">
    <property type="status" value="NOT_ANNOTATED_CDS"/>
    <property type="molecule type" value="Genomic_RNA"/>
</dbReference>
<dbReference type="SMR" id="P0CK65"/>
<dbReference type="GO" id="GO:0003723">
    <property type="term" value="F:RNA binding"/>
    <property type="evidence" value="ECO:0007669"/>
    <property type="project" value="InterPro"/>
</dbReference>
<dbReference type="GO" id="GO:0039694">
    <property type="term" value="P:viral RNA genome replication"/>
    <property type="evidence" value="ECO:0007669"/>
    <property type="project" value="InterPro"/>
</dbReference>
<dbReference type="GO" id="GO:0075523">
    <property type="term" value="P:viral translational frameshifting"/>
    <property type="evidence" value="ECO:0007669"/>
    <property type="project" value="UniProtKB-KW"/>
</dbReference>
<dbReference type="FunFam" id="3.40.91.90:FF:000001">
    <property type="entry name" value="Polymerase acidic protein"/>
    <property type="match status" value="1"/>
</dbReference>
<dbReference type="Gene3D" id="3.40.91.90">
    <property type="entry name" value="Influenza RNA-dependent RNA polymerase subunit PA, endonuclease domain"/>
    <property type="match status" value="1"/>
</dbReference>
<dbReference type="InterPro" id="IPR001009">
    <property type="entry name" value="PA/PA-X"/>
</dbReference>
<dbReference type="InterPro" id="IPR038372">
    <property type="entry name" value="PA/PA-X_sf"/>
</dbReference>
<dbReference type="Pfam" id="PF00603">
    <property type="entry name" value="Flu_PA"/>
    <property type="match status" value="1"/>
</dbReference>
<feature type="chain" id="PRO_0000419348" description="Protein PA-X">
    <location>
        <begin position="1"/>
        <end position="252"/>
    </location>
</feature>
<feature type="active site" evidence="2">
    <location>
        <position position="80"/>
    </location>
</feature>
<feature type="active site" evidence="2">
    <location>
        <position position="108"/>
    </location>
</feature>
<feature type="site" description="Important for efficient shutoff activity" evidence="5">
    <location>
        <position position="28"/>
    </location>
</feature>
<feature type="site" description="Important for efficient shutoff activity" evidence="5">
    <location>
        <position position="65"/>
    </location>
</feature>
<feature type="site" description="Important for efficient shutoff activity and nuclear localization" evidence="4">
    <location>
        <position position="195"/>
    </location>
</feature>
<feature type="site" description="Important for efficient shutoff activity and nuclear localization" evidence="4">
    <location>
        <position position="198"/>
    </location>
</feature>
<feature type="site" description="Important for efficient shutoff activity and nuclear localization" evidence="4">
    <location>
        <position position="199"/>
    </location>
</feature>
<feature type="site" description="Important for efficient shutoff activity" evidence="3">
    <location>
        <position position="202"/>
    </location>
</feature>
<feature type="site" description="Important for efficient shutoff activity" evidence="3">
    <location>
        <position position="203"/>
    </location>
</feature>
<feature type="site" description="Important for efficient shutoff activity" evidence="3">
    <location>
        <position position="206"/>
    </location>
</feature>
<organismHost>
    <name type="scientific">Aves</name>
    <dbReference type="NCBI Taxonomy" id="8782"/>
</organismHost>
<organismHost>
    <name type="scientific">Homo sapiens</name>
    <name type="common">Human</name>
    <dbReference type="NCBI Taxonomy" id="9606"/>
</organismHost>
<keyword id="KW-1132">Decay of host mRNAs by virus</keyword>
<keyword id="KW-1262">Eukaryotic host gene expression shutoff by virus</keyword>
<keyword id="KW-1035">Host cytoplasm</keyword>
<keyword id="KW-1190">Host gene expression shutoff by virus</keyword>
<keyword id="KW-1192">Host mRNA suppression by virus</keyword>
<keyword id="KW-1048">Host nucleus</keyword>
<keyword id="KW-0945">Host-virus interaction</keyword>
<keyword id="KW-0688">Ribosomal frameshifting</keyword>
<name>PAX_I60A0</name>
<organism>
    <name type="scientific">Influenza A virus (strain A/Ann Arbor/6/1960 H2N2)</name>
    <dbReference type="NCBI Taxonomy" id="384498"/>
    <lineage>
        <taxon>Viruses</taxon>
        <taxon>Riboviria</taxon>
        <taxon>Orthornavirae</taxon>
        <taxon>Negarnaviricota</taxon>
        <taxon>Polyploviricotina</taxon>
        <taxon>Insthoviricetes</taxon>
        <taxon>Articulavirales</taxon>
        <taxon>Orthomyxoviridae</taxon>
        <taxon>Alphainfluenzavirus</taxon>
        <taxon>Alphainfluenzavirus influenzae</taxon>
        <taxon>Influenza A virus</taxon>
    </lineage>
</organism>
<gene>
    <name type="primary">PA</name>
</gene>
<accession>P0CK65</accession>
<comment type="function">
    <text evidence="1 4">Plays a major role in the shutoff of the host protein expression by cleaving mRNAs probably via an endonuclease activity. This host shutoff allows the virus to escape from the host antiviral response (By similarity). Hijacks host RNA splicing machinery to selectively target host RNAs containing introns for destruction. This may explain the preferential degradation of RNAs that have undergone co- or post-transcriptional processing (By similarity).</text>
</comment>
<comment type="subcellular location">
    <subcellularLocation>
        <location evidence="4">Host cytoplasm</location>
    </subcellularLocation>
    <subcellularLocation>
        <location evidence="4">Host nucleus</location>
    </subcellularLocation>
</comment>
<comment type="alternative products">
    <event type="ribosomal frameshifting"/>
    <isoform>
        <id>P0CK65-1</id>
        <name>PA-X</name>
        <sequence type="displayed"/>
    </isoform>
    <isoform>
        <id>P21427-1</id>
        <name>PA</name>
        <sequence type="external"/>
    </isoform>
</comment>
<comment type="domain">
    <text evidence="1 4">The probable endonuclease active site in the N-terminus and the basic amino acid cluster in the C-terminus are important for the shutoff activity. The C-terminus acts as a nuclear localization signal (By similarity). The C-terminus is recruited to host protein complexes involved in nuclear Pol II RNA processing (By similarity).</text>
</comment>
<comment type="similarity">
    <text evidence="6">Belongs to the influenza viruses PA-X family.</text>
</comment>
<protein>
    <recommendedName>
        <fullName>Protein PA-X</fullName>
    </recommendedName>
</protein>